<accession>Q5ZSN0</accession>
<comment type="function">
    <text evidence="1">This enzyme is involved in nucleotide metabolism: it produces dUMP, the immediate precursor of thymidine nucleotides and it decreases the intracellular concentration of dUTP so that uracil cannot be incorporated into DNA.</text>
</comment>
<comment type="catalytic activity">
    <reaction evidence="1">
        <text>dUTP + H2O = dUMP + diphosphate + H(+)</text>
        <dbReference type="Rhea" id="RHEA:10248"/>
        <dbReference type="ChEBI" id="CHEBI:15377"/>
        <dbReference type="ChEBI" id="CHEBI:15378"/>
        <dbReference type="ChEBI" id="CHEBI:33019"/>
        <dbReference type="ChEBI" id="CHEBI:61555"/>
        <dbReference type="ChEBI" id="CHEBI:246422"/>
        <dbReference type="EC" id="3.6.1.23"/>
    </reaction>
</comment>
<comment type="cofactor">
    <cofactor evidence="1">
        <name>Mg(2+)</name>
        <dbReference type="ChEBI" id="CHEBI:18420"/>
    </cofactor>
</comment>
<comment type="pathway">
    <text evidence="1">Pyrimidine metabolism; dUMP biosynthesis; dUMP from dCTP (dUTP route): step 2/2.</text>
</comment>
<comment type="similarity">
    <text evidence="1">Belongs to the dUTPase family.</text>
</comment>
<comment type="sequence caution" evidence="2">
    <conflict type="erroneous initiation">
        <sequence resource="EMBL-CDS" id="AAU28547"/>
    </conflict>
</comment>
<evidence type="ECO:0000255" key="1">
    <source>
        <dbReference type="HAMAP-Rule" id="MF_00116"/>
    </source>
</evidence>
<evidence type="ECO:0000305" key="2"/>
<evidence type="ECO:0007829" key="3">
    <source>
        <dbReference type="PDB" id="6MAI"/>
    </source>
</evidence>
<dbReference type="EC" id="3.6.1.23" evidence="1"/>
<dbReference type="EMBL" id="AE017354">
    <property type="protein sequence ID" value="AAU28547.1"/>
    <property type="status" value="ALT_INIT"/>
    <property type="molecule type" value="Genomic_DNA"/>
</dbReference>
<dbReference type="RefSeq" id="WP_014842515.1">
    <property type="nucleotide sequence ID" value="NC_002942.5"/>
</dbReference>
<dbReference type="RefSeq" id="YP_096494.1">
    <property type="nucleotide sequence ID" value="NC_002942.5"/>
</dbReference>
<dbReference type="PDB" id="6MAI">
    <property type="method" value="X-ray"/>
    <property type="resolution" value="1.80 A"/>
    <property type="chains" value="A=1-152"/>
</dbReference>
<dbReference type="PDB" id="6MAO">
    <property type="method" value="X-ray"/>
    <property type="resolution" value="1.95 A"/>
    <property type="chains" value="A=1-152"/>
</dbReference>
<dbReference type="PDBsum" id="6MAI"/>
<dbReference type="PDBsum" id="6MAO"/>
<dbReference type="SMR" id="Q5ZSN0"/>
<dbReference type="STRING" id="272624.lpg2487"/>
<dbReference type="PaxDb" id="272624-lpg2487"/>
<dbReference type="GeneID" id="57036481"/>
<dbReference type="KEGG" id="lpn:lpg2487"/>
<dbReference type="PATRIC" id="fig|272624.6.peg.2636"/>
<dbReference type="eggNOG" id="COG0756">
    <property type="taxonomic scope" value="Bacteria"/>
</dbReference>
<dbReference type="HOGENOM" id="CLU_068508_1_1_6"/>
<dbReference type="OrthoDB" id="9809956at2"/>
<dbReference type="UniPathway" id="UPA00610">
    <property type="reaction ID" value="UER00666"/>
</dbReference>
<dbReference type="Proteomes" id="UP000000609">
    <property type="component" value="Chromosome"/>
</dbReference>
<dbReference type="GO" id="GO:0004170">
    <property type="term" value="F:dUTP diphosphatase activity"/>
    <property type="evidence" value="ECO:0007669"/>
    <property type="project" value="UniProtKB-UniRule"/>
</dbReference>
<dbReference type="GO" id="GO:0000287">
    <property type="term" value="F:magnesium ion binding"/>
    <property type="evidence" value="ECO:0007669"/>
    <property type="project" value="UniProtKB-UniRule"/>
</dbReference>
<dbReference type="GO" id="GO:0006226">
    <property type="term" value="P:dUMP biosynthetic process"/>
    <property type="evidence" value="ECO:0007669"/>
    <property type="project" value="UniProtKB-UniRule"/>
</dbReference>
<dbReference type="GO" id="GO:0046081">
    <property type="term" value="P:dUTP catabolic process"/>
    <property type="evidence" value="ECO:0007669"/>
    <property type="project" value="InterPro"/>
</dbReference>
<dbReference type="CDD" id="cd07557">
    <property type="entry name" value="trimeric_dUTPase"/>
    <property type="match status" value="1"/>
</dbReference>
<dbReference type="FunFam" id="2.70.40.10:FF:000002">
    <property type="entry name" value="dUTP diphosphatase"/>
    <property type="match status" value="1"/>
</dbReference>
<dbReference type="Gene3D" id="2.70.40.10">
    <property type="match status" value="1"/>
</dbReference>
<dbReference type="HAMAP" id="MF_00116">
    <property type="entry name" value="dUTPase_bact"/>
    <property type="match status" value="1"/>
</dbReference>
<dbReference type="InterPro" id="IPR008181">
    <property type="entry name" value="dUTPase"/>
</dbReference>
<dbReference type="InterPro" id="IPR029054">
    <property type="entry name" value="dUTPase-like"/>
</dbReference>
<dbReference type="InterPro" id="IPR036157">
    <property type="entry name" value="dUTPase-like_sf"/>
</dbReference>
<dbReference type="InterPro" id="IPR033704">
    <property type="entry name" value="dUTPase_trimeric"/>
</dbReference>
<dbReference type="NCBIfam" id="TIGR00576">
    <property type="entry name" value="dut"/>
    <property type="match status" value="1"/>
</dbReference>
<dbReference type="NCBIfam" id="NF001862">
    <property type="entry name" value="PRK00601.1"/>
    <property type="match status" value="1"/>
</dbReference>
<dbReference type="PANTHER" id="PTHR11241">
    <property type="entry name" value="DEOXYURIDINE 5'-TRIPHOSPHATE NUCLEOTIDOHYDROLASE"/>
    <property type="match status" value="1"/>
</dbReference>
<dbReference type="PANTHER" id="PTHR11241:SF0">
    <property type="entry name" value="DEOXYURIDINE 5'-TRIPHOSPHATE NUCLEOTIDOHYDROLASE"/>
    <property type="match status" value="1"/>
</dbReference>
<dbReference type="Pfam" id="PF00692">
    <property type="entry name" value="dUTPase"/>
    <property type="match status" value="1"/>
</dbReference>
<dbReference type="SUPFAM" id="SSF51283">
    <property type="entry name" value="dUTPase-like"/>
    <property type="match status" value="1"/>
</dbReference>
<gene>
    <name evidence="1" type="primary">dut</name>
    <name type="ordered locus">lpg2487</name>
</gene>
<reference key="1">
    <citation type="journal article" date="2004" name="Science">
        <title>The genomic sequence of the accidental pathogen Legionella pneumophila.</title>
        <authorList>
            <person name="Chien M."/>
            <person name="Morozova I."/>
            <person name="Shi S."/>
            <person name="Sheng H."/>
            <person name="Chen J."/>
            <person name="Gomez S.M."/>
            <person name="Asamani G."/>
            <person name="Hill K."/>
            <person name="Nuara J."/>
            <person name="Feder M."/>
            <person name="Rineer J."/>
            <person name="Greenberg J.J."/>
            <person name="Steshenko V."/>
            <person name="Park S.H."/>
            <person name="Zhao B."/>
            <person name="Teplitskaya E."/>
            <person name="Edwards J.R."/>
            <person name="Pampou S."/>
            <person name="Georghiou A."/>
            <person name="Chou I.-C."/>
            <person name="Iannuccilli W."/>
            <person name="Ulz M.E."/>
            <person name="Kim D.H."/>
            <person name="Geringer-Sameth A."/>
            <person name="Goldsberry C."/>
            <person name="Morozov P."/>
            <person name="Fischer S.G."/>
            <person name="Segal G."/>
            <person name="Qu X."/>
            <person name="Rzhetsky A."/>
            <person name="Zhang P."/>
            <person name="Cayanis E."/>
            <person name="De Jong P.J."/>
            <person name="Ju J."/>
            <person name="Kalachikov S."/>
            <person name="Shuman H.A."/>
            <person name="Russo J.J."/>
        </authorList>
    </citation>
    <scope>NUCLEOTIDE SEQUENCE [LARGE SCALE GENOMIC DNA]</scope>
    <source>
        <strain>Philadelphia 1 / ATCC 33152 / DSM 7513</strain>
    </source>
</reference>
<protein>
    <recommendedName>
        <fullName evidence="1">Deoxyuridine 5'-triphosphate nucleotidohydrolase</fullName>
        <shortName evidence="1">dUTPase</shortName>
        <ecNumber evidence="1">3.6.1.23</ecNumber>
    </recommendedName>
    <alternativeName>
        <fullName evidence="1">dUTP pyrophosphatase</fullName>
    </alternativeName>
</protein>
<keyword id="KW-0002">3D-structure</keyword>
<keyword id="KW-0378">Hydrolase</keyword>
<keyword id="KW-0460">Magnesium</keyword>
<keyword id="KW-0479">Metal-binding</keyword>
<keyword id="KW-0546">Nucleotide metabolism</keyword>
<keyword id="KW-1185">Reference proteome</keyword>
<proteinExistence type="evidence at protein level"/>
<sequence length="152" mass="16347">MHQVIQLKILDSRIGDTIPLPAYATDGSAGLDLRVCISEPMQVAPQQTVLLPTGIAIYIADPKLAAVILPRSGLGHKNGIVLGNLVGLIDSDYQGELKISCWNRSQEHFTVNPGDRIAQLVFIPVVQASFEVVNEFTESSRGEGGFGSSGRY</sequence>
<organism>
    <name type="scientific">Legionella pneumophila subsp. pneumophila (strain Philadelphia 1 / ATCC 33152 / DSM 7513)</name>
    <dbReference type="NCBI Taxonomy" id="272624"/>
    <lineage>
        <taxon>Bacteria</taxon>
        <taxon>Pseudomonadati</taxon>
        <taxon>Pseudomonadota</taxon>
        <taxon>Gammaproteobacteria</taxon>
        <taxon>Legionellales</taxon>
        <taxon>Legionellaceae</taxon>
        <taxon>Legionella</taxon>
    </lineage>
</organism>
<feature type="chain" id="PRO_0000182874" description="Deoxyuridine 5'-triphosphate nucleotidohydrolase">
    <location>
        <begin position="1"/>
        <end position="152"/>
    </location>
</feature>
<feature type="binding site" evidence="1">
    <location>
        <begin position="71"/>
        <end position="73"/>
    </location>
    <ligand>
        <name>substrate</name>
    </ligand>
</feature>
<feature type="binding site" evidence="1">
    <location>
        <position position="84"/>
    </location>
    <ligand>
        <name>substrate</name>
    </ligand>
</feature>
<feature type="binding site" evidence="1">
    <location>
        <begin position="88"/>
        <end position="90"/>
    </location>
    <ligand>
        <name>substrate</name>
    </ligand>
</feature>
<feature type="binding site" evidence="1">
    <location>
        <position position="98"/>
    </location>
    <ligand>
        <name>substrate</name>
    </ligand>
</feature>
<feature type="strand" evidence="3">
    <location>
        <begin position="6"/>
        <end position="9"/>
    </location>
</feature>
<feature type="turn" evidence="3">
    <location>
        <begin position="15"/>
        <end position="17"/>
    </location>
</feature>
<feature type="strand" evidence="3">
    <location>
        <begin position="31"/>
        <end position="34"/>
    </location>
</feature>
<feature type="strand" evidence="3">
    <location>
        <begin position="41"/>
        <end position="43"/>
    </location>
</feature>
<feature type="strand" evidence="3">
    <location>
        <begin position="48"/>
        <end position="58"/>
    </location>
</feature>
<feature type="strand" evidence="3">
    <location>
        <begin position="64"/>
        <end position="70"/>
    </location>
</feature>
<feature type="helix" evidence="3">
    <location>
        <begin position="72"/>
        <end position="78"/>
    </location>
</feature>
<feature type="strand" evidence="3">
    <location>
        <begin position="80"/>
        <end position="82"/>
    </location>
</feature>
<feature type="strand" evidence="3">
    <location>
        <begin position="85"/>
        <end position="89"/>
    </location>
</feature>
<feature type="strand" evidence="3">
    <location>
        <begin position="95"/>
        <end position="103"/>
    </location>
</feature>
<feature type="strand" evidence="3">
    <location>
        <begin position="105"/>
        <end position="107"/>
    </location>
</feature>
<feature type="strand" evidence="3">
    <location>
        <begin position="109"/>
        <end position="111"/>
    </location>
</feature>
<feature type="strand" evidence="3">
    <location>
        <begin position="116"/>
        <end position="124"/>
    </location>
</feature>
<name>DUT_LEGPH</name>